<feature type="chain" id="PRO_0000058828" description="Serine/threonine-protein phosphatase 2B catalytic subunit gamma isoform">
    <location>
        <begin position="1"/>
        <end position="512"/>
    </location>
</feature>
<feature type="region of interest" description="Catalytic" evidence="11">
    <location>
        <begin position="52"/>
        <end position="343"/>
    </location>
</feature>
<feature type="region of interest" description="Calcineurin B binding" evidence="1">
    <location>
        <begin position="344"/>
        <end position="366"/>
    </location>
</feature>
<feature type="region of interest" description="Calmodulin-binding" evidence="1">
    <location>
        <begin position="386"/>
        <end position="400"/>
    </location>
</feature>
<feature type="region of interest" description="Autoinhibitory segment" evidence="1">
    <location>
        <begin position="401"/>
        <end position="408"/>
    </location>
</feature>
<feature type="region of interest" description="Autoinhibitory domain" evidence="1">
    <location>
        <begin position="459"/>
        <end position="481"/>
    </location>
</feature>
<feature type="region of interest" description="Disordered" evidence="4">
    <location>
        <begin position="471"/>
        <end position="512"/>
    </location>
</feature>
<feature type="short sequence motif" description="SAPNY motif" evidence="3">
    <location>
        <begin position="303"/>
        <end position="307"/>
    </location>
</feature>
<feature type="compositionally biased region" description="Basic and acidic residues" evidence="4">
    <location>
        <begin position="471"/>
        <end position="484"/>
    </location>
</feature>
<feature type="compositionally biased region" description="Basic and acidic residues" evidence="4">
    <location>
        <begin position="502"/>
        <end position="512"/>
    </location>
</feature>
<feature type="active site" description="Proton donor" evidence="3">
    <location>
        <position position="147"/>
    </location>
</feature>
<feature type="binding site" evidence="1">
    <location>
        <position position="86"/>
    </location>
    <ligand>
        <name>Fe cation</name>
        <dbReference type="ChEBI" id="CHEBI:24875"/>
    </ligand>
</feature>
<feature type="binding site" evidence="1">
    <location>
        <position position="88"/>
    </location>
    <ligand>
        <name>Fe cation</name>
        <dbReference type="ChEBI" id="CHEBI:24875"/>
    </ligand>
</feature>
<feature type="binding site" evidence="1">
    <location>
        <position position="114"/>
    </location>
    <ligand>
        <name>Fe cation</name>
        <dbReference type="ChEBI" id="CHEBI:24875"/>
    </ligand>
</feature>
<feature type="binding site" evidence="1">
    <location>
        <position position="114"/>
    </location>
    <ligand>
        <name>Zn(2+)</name>
        <dbReference type="ChEBI" id="CHEBI:29105"/>
    </ligand>
</feature>
<feature type="binding site" evidence="1">
    <location>
        <position position="146"/>
    </location>
    <ligand>
        <name>Zn(2+)</name>
        <dbReference type="ChEBI" id="CHEBI:29105"/>
    </ligand>
</feature>
<feature type="binding site" evidence="1">
    <location>
        <position position="195"/>
    </location>
    <ligand>
        <name>Zn(2+)</name>
        <dbReference type="ChEBI" id="CHEBI:29105"/>
    </ligand>
</feature>
<feature type="binding site" evidence="1">
    <location>
        <position position="277"/>
    </location>
    <ligand>
        <name>Zn(2+)</name>
        <dbReference type="ChEBI" id="CHEBI:29105"/>
    </ligand>
</feature>
<feature type="modified residue" description="Phosphoserine" evidence="12">
    <location>
        <position position="483"/>
    </location>
</feature>
<feature type="splice variant" id="VSP_045211" description="In isoform 3." evidence="9">
    <original>E</original>
    <variation>EDHYIPSYQK</variation>
    <location>
        <position position="380"/>
    </location>
</feature>
<feature type="splice variant" id="VSP_037946" description="In isoform 2." evidence="8 10">
    <location>
        <begin position="442"/>
        <end position="451"/>
    </location>
</feature>
<feature type="sequence variant" id="VAR_061758" description="In dbSNP:rs28764007.">
    <original>A</original>
    <variation>V</variation>
    <location>
        <position position="501"/>
    </location>
</feature>
<feature type="sequence conflict" description="In Ref. 1; AAB23769." evidence="11" ref="1">
    <original>HA</original>
    <variation>YP</variation>
    <location>
        <begin position="485"/>
        <end position="486"/>
    </location>
</feature>
<feature type="helix" evidence="13">
    <location>
        <begin position="340"/>
        <end position="342"/>
    </location>
</feature>
<feature type="helix" evidence="13">
    <location>
        <begin position="345"/>
        <end position="364"/>
    </location>
</feature>
<dbReference type="EC" id="3.1.3.16" evidence="6"/>
<dbReference type="EMBL" id="S46622">
    <property type="protein sequence ID" value="AAB23769.1"/>
    <property type="molecule type" value="mRNA"/>
</dbReference>
<dbReference type="EMBL" id="AY007249">
    <property type="protein sequence ID" value="AAG02563.1"/>
    <property type="molecule type" value="mRNA"/>
</dbReference>
<dbReference type="EMBL" id="AK299415">
    <property type="protein sequence ID" value="BAG61397.1"/>
    <property type="molecule type" value="mRNA"/>
</dbReference>
<dbReference type="EMBL" id="AC037459">
    <property type="status" value="NOT_ANNOTATED_CDS"/>
    <property type="molecule type" value="Genomic_DNA"/>
</dbReference>
<dbReference type="EMBL" id="AC087854">
    <property type="status" value="NOT_ANNOTATED_CDS"/>
    <property type="molecule type" value="Genomic_DNA"/>
</dbReference>
<dbReference type="EMBL" id="CH471080">
    <property type="protein sequence ID" value="EAW63677.1"/>
    <property type="molecule type" value="Genomic_DNA"/>
</dbReference>
<dbReference type="EMBL" id="CH471080">
    <property type="protein sequence ID" value="EAW63679.1"/>
    <property type="molecule type" value="Genomic_DNA"/>
</dbReference>
<dbReference type="EMBL" id="BC004864">
    <property type="protein sequence ID" value="AAH04864.1"/>
    <property type="molecule type" value="mRNA"/>
</dbReference>
<dbReference type="CCDS" id="CCDS34859.1">
    <molecule id="P48454-1"/>
</dbReference>
<dbReference type="CCDS" id="CCDS59093.1">
    <molecule id="P48454-3"/>
</dbReference>
<dbReference type="CCDS" id="CCDS59094.1">
    <molecule id="P48454-2"/>
</dbReference>
<dbReference type="PIR" id="JC1283">
    <property type="entry name" value="JC1283"/>
</dbReference>
<dbReference type="RefSeq" id="NP_001230903.1">
    <molecule id="P48454-3"/>
    <property type="nucleotide sequence ID" value="NM_001243974.2"/>
</dbReference>
<dbReference type="RefSeq" id="NP_001230904.1">
    <molecule id="P48454-2"/>
    <property type="nucleotide sequence ID" value="NM_001243975.2"/>
</dbReference>
<dbReference type="RefSeq" id="NP_005596.2">
    <molecule id="P48454-1"/>
    <property type="nucleotide sequence ID" value="NM_005605.4"/>
</dbReference>
<dbReference type="PDB" id="7U0T">
    <property type="method" value="X-ray"/>
    <property type="resolution" value="2.45 A"/>
    <property type="chains" value="A=333-368"/>
</dbReference>
<dbReference type="PDBsum" id="7U0T"/>
<dbReference type="SMR" id="P48454"/>
<dbReference type="BioGRID" id="111525">
    <property type="interactions" value="76"/>
</dbReference>
<dbReference type="ComplexPortal" id="CPX-1001">
    <property type="entry name" value="Calcineurin-Calmodulin complex, gamma-R1 variant"/>
</dbReference>
<dbReference type="ComplexPortal" id="CPX-1050">
    <property type="entry name" value="Calcineurin-Calmodulin complex, gamma-R2 variant"/>
</dbReference>
<dbReference type="ComplexPortal" id="CPX-1112">
    <property type="entry name" value="Calcineurin-Calmodulin-AKAP5 complex, gamma-R1 variant"/>
</dbReference>
<dbReference type="ComplexPortal" id="CPX-1118">
    <property type="entry name" value="Calcineurin-Calmodulin-AKAP5 complex, gamma-R2 variant"/>
</dbReference>
<dbReference type="CORUM" id="P48454"/>
<dbReference type="FunCoup" id="P48454">
    <property type="interactions" value="1620"/>
</dbReference>
<dbReference type="IntAct" id="P48454">
    <property type="interactions" value="65"/>
</dbReference>
<dbReference type="MINT" id="P48454"/>
<dbReference type="STRING" id="9606.ENSP00000380878"/>
<dbReference type="BindingDB" id="P48454"/>
<dbReference type="DrugCentral" id="P48454"/>
<dbReference type="DEPOD" id="PPP3CC"/>
<dbReference type="GlyGen" id="P48454">
    <property type="glycosylation" value="1 site, 1 O-linked glycan (1 site)"/>
</dbReference>
<dbReference type="iPTMnet" id="P48454"/>
<dbReference type="PhosphoSitePlus" id="P48454"/>
<dbReference type="BioMuta" id="PPP3CC"/>
<dbReference type="DMDM" id="257051041"/>
<dbReference type="jPOST" id="P48454"/>
<dbReference type="MassIVE" id="P48454"/>
<dbReference type="PaxDb" id="9606-ENSP00000380878"/>
<dbReference type="PeptideAtlas" id="P48454"/>
<dbReference type="ProteomicsDB" id="4973"/>
<dbReference type="ProteomicsDB" id="55894">
    <molecule id="P48454-1"/>
</dbReference>
<dbReference type="ProteomicsDB" id="55895">
    <molecule id="P48454-2"/>
</dbReference>
<dbReference type="Pumba" id="P48454"/>
<dbReference type="Antibodypedia" id="9535">
    <property type="antibodies" value="223 antibodies from 30 providers"/>
</dbReference>
<dbReference type="DNASU" id="5533"/>
<dbReference type="Ensembl" id="ENST00000240139.10">
    <molecule id="P48454-1"/>
    <property type="protein sequence ID" value="ENSP00000240139.5"/>
    <property type="gene ID" value="ENSG00000120910.15"/>
</dbReference>
<dbReference type="Ensembl" id="ENST00000289963.12">
    <molecule id="P48454-2"/>
    <property type="protein sequence ID" value="ENSP00000289963.8"/>
    <property type="gene ID" value="ENSG00000120910.15"/>
</dbReference>
<dbReference type="Ensembl" id="ENST00000397775.7">
    <molecule id="P48454-3"/>
    <property type="protein sequence ID" value="ENSP00000380878.3"/>
    <property type="gene ID" value="ENSG00000120910.15"/>
</dbReference>
<dbReference type="GeneID" id="5533"/>
<dbReference type="KEGG" id="hsa:5533"/>
<dbReference type="MANE-Select" id="ENST00000240139.10">
    <property type="protein sequence ID" value="ENSP00000240139.5"/>
    <property type="RefSeq nucleotide sequence ID" value="NM_005605.5"/>
    <property type="RefSeq protein sequence ID" value="NP_005596.2"/>
</dbReference>
<dbReference type="UCSC" id="uc003xbs.4">
    <molecule id="P48454-1"/>
    <property type="organism name" value="human"/>
</dbReference>
<dbReference type="AGR" id="HGNC:9316"/>
<dbReference type="CTD" id="5533"/>
<dbReference type="DisGeNET" id="5533"/>
<dbReference type="GeneCards" id="PPP3CC"/>
<dbReference type="HGNC" id="HGNC:9316">
    <property type="gene designation" value="PPP3CC"/>
</dbReference>
<dbReference type="HPA" id="ENSG00000120910">
    <property type="expression patterns" value="Low tissue specificity"/>
</dbReference>
<dbReference type="MIM" id="114107">
    <property type="type" value="gene"/>
</dbReference>
<dbReference type="neXtProt" id="NX_P48454"/>
<dbReference type="OpenTargets" id="ENSG00000120910"/>
<dbReference type="PharmGKB" id="PA33680"/>
<dbReference type="VEuPathDB" id="HostDB:ENSG00000120910"/>
<dbReference type="eggNOG" id="KOG0375">
    <property type="taxonomic scope" value="Eukaryota"/>
</dbReference>
<dbReference type="GeneTree" id="ENSGT00940000154115"/>
<dbReference type="InParanoid" id="P48454"/>
<dbReference type="OMA" id="CMNTFDC"/>
<dbReference type="OrthoDB" id="5593063at2759"/>
<dbReference type="PAN-GO" id="P48454">
    <property type="GO annotations" value="5 GO annotations based on evolutionary models"/>
</dbReference>
<dbReference type="PhylomeDB" id="P48454"/>
<dbReference type="TreeFam" id="TF105557"/>
<dbReference type="PathwayCommons" id="P48454"/>
<dbReference type="Reactome" id="R-HSA-111447">
    <property type="pathway name" value="Activation of BAD and translocation to mitochondria"/>
</dbReference>
<dbReference type="Reactome" id="R-HSA-180024">
    <property type="pathway name" value="DARPP-32 events"/>
</dbReference>
<dbReference type="SignaLink" id="P48454"/>
<dbReference type="SIGNOR" id="P48454"/>
<dbReference type="BioGRID-ORCS" id="5533">
    <property type="hits" value="7 hits in 1176 CRISPR screens"/>
</dbReference>
<dbReference type="ChiTaRS" id="PPP3CC">
    <property type="organism name" value="human"/>
</dbReference>
<dbReference type="GeneWiki" id="PPP3CC"/>
<dbReference type="GenomeRNAi" id="5533"/>
<dbReference type="Pharos" id="P48454">
    <property type="development level" value="Tbio"/>
</dbReference>
<dbReference type="PRO" id="PR:P48454"/>
<dbReference type="Proteomes" id="UP000005640">
    <property type="component" value="Chromosome 8"/>
</dbReference>
<dbReference type="RNAct" id="P48454">
    <property type="molecule type" value="protein"/>
</dbReference>
<dbReference type="Bgee" id="ENSG00000120910">
    <property type="expression patterns" value="Expressed in gastrocnemius and 199 other cell types or tissues"/>
</dbReference>
<dbReference type="ExpressionAtlas" id="P48454">
    <property type="expression patterns" value="baseline and differential"/>
</dbReference>
<dbReference type="GO" id="GO:0005955">
    <property type="term" value="C:calcineurin complex"/>
    <property type="evidence" value="ECO:0000318"/>
    <property type="project" value="GO_Central"/>
</dbReference>
<dbReference type="GO" id="GO:0005737">
    <property type="term" value="C:cytoplasm"/>
    <property type="evidence" value="ECO:0000314"/>
    <property type="project" value="UniProtKB"/>
</dbReference>
<dbReference type="GO" id="GO:0005829">
    <property type="term" value="C:cytosol"/>
    <property type="evidence" value="ECO:0000304"/>
    <property type="project" value="Reactome"/>
</dbReference>
<dbReference type="GO" id="GO:0098978">
    <property type="term" value="C:glutamatergic synapse"/>
    <property type="evidence" value="ECO:0007669"/>
    <property type="project" value="Ensembl"/>
</dbReference>
<dbReference type="GO" id="GO:0005739">
    <property type="term" value="C:mitochondrion"/>
    <property type="evidence" value="ECO:0007669"/>
    <property type="project" value="UniProtKB-SubCell"/>
</dbReference>
<dbReference type="GO" id="GO:0098793">
    <property type="term" value="C:presynapse"/>
    <property type="evidence" value="ECO:0007669"/>
    <property type="project" value="Ensembl"/>
</dbReference>
<dbReference type="GO" id="GO:0008287">
    <property type="term" value="C:protein serine/threonine phosphatase complex"/>
    <property type="evidence" value="ECO:0000303"/>
    <property type="project" value="ComplexPortal"/>
</dbReference>
<dbReference type="GO" id="GO:0004723">
    <property type="term" value="F:calcium-dependent protein serine/threonine phosphatase activity"/>
    <property type="evidence" value="ECO:0000314"/>
    <property type="project" value="MGI"/>
</dbReference>
<dbReference type="GO" id="GO:0005516">
    <property type="term" value="F:calmodulin binding"/>
    <property type="evidence" value="ECO:0000318"/>
    <property type="project" value="GO_Central"/>
</dbReference>
<dbReference type="GO" id="GO:0033192">
    <property type="term" value="F:calmodulin-dependent protein phosphatase activity"/>
    <property type="evidence" value="ECO:0000314"/>
    <property type="project" value="UniProtKB"/>
</dbReference>
<dbReference type="GO" id="GO:0046872">
    <property type="term" value="F:metal ion binding"/>
    <property type="evidence" value="ECO:0007669"/>
    <property type="project" value="UniProtKB-KW"/>
</dbReference>
<dbReference type="GO" id="GO:0097720">
    <property type="term" value="P:calcineurin-mediated signaling"/>
    <property type="evidence" value="ECO:0000318"/>
    <property type="project" value="GO_Central"/>
</dbReference>
<dbReference type="GO" id="GO:0033173">
    <property type="term" value="P:calcineurin-NFAT signaling cascade"/>
    <property type="evidence" value="ECO:0000314"/>
    <property type="project" value="UniProtKB"/>
</dbReference>
<dbReference type="GO" id="GO:1905949">
    <property type="term" value="P:negative regulation of calcium ion import across plasma membrane"/>
    <property type="evidence" value="ECO:0000303"/>
    <property type="project" value="ComplexPortal"/>
</dbReference>
<dbReference type="GO" id="GO:0070886">
    <property type="term" value="P:positive regulation of calcineurin-NFAT signaling cascade"/>
    <property type="evidence" value="ECO:0000303"/>
    <property type="project" value="ComplexPortal"/>
</dbReference>
<dbReference type="GO" id="GO:1905665">
    <property type="term" value="P:positive regulation of calcium ion import across plasma membrane"/>
    <property type="evidence" value="ECO:0000303"/>
    <property type="project" value="ComplexPortal"/>
</dbReference>
<dbReference type="GO" id="GO:1900244">
    <property type="term" value="P:positive regulation of synaptic vesicle endocytosis"/>
    <property type="evidence" value="ECO:0007669"/>
    <property type="project" value="Ensembl"/>
</dbReference>
<dbReference type="GO" id="GO:0006470">
    <property type="term" value="P:protein dephosphorylation"/>
    <property type="evidence" value="ECO:0000314"/>
    <property type="project" value="UniProtKB"/>
</dbReference>
<dbReference type="CDD" id="cd07416">
    <property type="entry name" value="MPP_PP2B"/>
    <property type="match status" value="1"/>
</dbReference>
<dbReference type="FunFam" id="3.60.21.10:FF:000002">
    <property type="entry name" value="Serine/threonine-protein phosphatase"/>
    <property type="match status" value="1"/>
</dbReference>
<dbReference type="Gene3D" id="3.60.21.10">
    <property type="match status" value="1"/>
</dbReference>
<dbReference type="InterPro" id="IPR004843">
    <property type="entry name" value="Calcineurin-like_PHP_ApaH"/>
</dbReference>
<dbReference type="InterPro" id="IPR029052">
    <property type="entry name" value="Metallo-depent_PP-like"/>
</dbReference>
<dbReference type="InterPro" id="IPR041751">
    <property type="entry name" value="MPP_PP2B"/>
</dbReference>
<dbReference type="InterPro" id="IPR043360">
    <property type="entry name" value="PP2B"/>
</dbReference>
<dbReference type="InterPro" id="IPR006186">
    <property type="entry name" value="Ser/Thr-sp_prot-phosphatase"/>
</dbReference>
<dbReference type="PANTHER" id="PTHR45673">
    <property type="entry name" value="SERINE/THREONINE-PROTEIN PHOSPHATASE 2B CATALYTIC SUBUNIT 1-RELATED"/>
    <property type="match status" value="1"/>
</dbReference>
<dbReference type="Pfam" id="PF00149">
    <property type="entry name" value="Metallophos"/>
    <property type="match status" value="1"/>
</dbReference>
<dbReference type="PRINTS" id="PR00114">
    <property type="entry name" value="STPHPHTASE"/>
</dbReference>
<dbReference type="SMART" id="SM00156">
    <property type="entry name" value="PP2Ac"/>
    <property type="match status" value="1"/>
</dbReference>
<dbReference type="SUPFAM" id="SSF56300">
    <property type="entry name" value="Metallo-dependent phosphatases"/>
    <property type="match status" value="1"/>
</dbReference>
<dbReference type="PROSITE" id="PS00125">
    <property type="entry name" value="SER_THR_PHOSPHATASE"/>
    <property type="match status" value="1"/>
</dbReference>
<sequence length="512" mass="58129">MSGRRFHLSTTDRVIKAVPFPPTQRLTFKEVFENGKPKVDVLKNHLVKEGRLEEEVALKIINDGAAILRQEKTMIEVDAPITVCGDIHGQFFDLMKLFEVGGSPSNTRYLFLGDYVDRGYFSIECVLYLWSLKINHPKTLFLLRGNHECRHLTDYFTFKQECRIKYSEQVYDACMETFDCLPLAALLNQQFLCVHGGMSPEITSLDDIRKLDRFTEPPAFGPVCDLLWSDPSEDYGNEKTLEHYTHNTVRGCSYFYSYPAVCEFLQNNNLLSIIRAHEAQDAGYRMYRKSQATGFPSLITIFSAPNYLDVYNNKAAVLKYENNVMNIRQFNCSPHPYWLPNFMDVFTWSLPFVGEKVTEMLVNVLNICSDDELISDDEAEGSTTVRKEIIRNKIRAIGKMARVFSILRQESESVLTLKGLTPTGTLPLGVLSGGKQTIETATVEAVEAREAIRGFSLQHKIRSFEEARGLDRINERMPPRKDSIHAGGPMKSVTSAHSHAAHRSDQGKKAHS</sequence>
<reference key="1">
    <citation type="journal article" date="1992" name="Biochem. Biophys. Res. Commun.">
        <title>Molecular cloning and chromosomal mapping of the human gene for the testis-specific catalytic subunit of calmodulin-dependent protein phosphatase (calcineurin A).</title>
        <authorList>
            <person name="Muramatsu T."/>
            <person name="Kincaid R.L."/>
        </authorList>
    </citation>
    <scope>NUCLEOTIDE SEQUENCE [MRNA] (ISOFORM 2)</scope>
    <scope>TISSUE SPECIFICITY</scope>
    <source>
        <tissue>Testis</tissue>
    </source>
</reference>
<reference key="2">
    <citation type="submission" date="2000-08" db="EMBL/GenBank/DDBJ databases">
        <title>Isoform specific expression of calcineurin in endothelial cells.</title>
        <authorList>
            <person name="Bako E."/>
            <person name="Aydonian A."/>
            <person name="Verin A.D."/>
            <person name="Garcia J.G.N."/>
        </authorList>
    </citation>
    <scope>NUCLEOTIDE SEQUENCE [MRNA] (ISOFORM 2)</scope>
    <source>
        <tissue>Endothelial cell</tissue>
    </source>
</reference>
<reference key="3">
    <citation type="journal article" date="2004" name="Nat. Genet.">
        <title>Complete sequencing and characterization of 21,243 full-length human cDNAs.</title>
        <authorList>
            <person name="Ota T."/>
            <person name="Suzuki Y."/>
            <person name="Nishikawa T."/>
            <person name="Otsuki T."/>
            <person name="Sugiyama T."/>
            <person name="Irie R."/>
            <person name="Wakamatsu A."/>
            <person name="Hayashi K."/>
            <person name="Sato H."/>
            <person name="Nagai K."/>
            <person name="Kimura K."/>
            <person name="Makita H."/>
            <person name="Sekine M."/>
            <person name="Obayashi M."/>
            <person name="Nishi T."/>
            <person name="Shibahara T."/>
            <person name="Tanaka T."/>
            <person name="Ishii S."/>
            <person name="Yamamoto J."/>
            <person name="Saito K."/>
            <person name="Kawai Y."/>
            <person name="Isono Y."/>
            <person name="Nakamura Y."/>
            <person name="Nagahari K."/>
            <person name="Murakami K."/>
            <person name="Yasuda T."/>
            <person name="Iwayanagi T."/>
            <person name="Wagatsuma M."/>
            <person name="Shiratori A."/>
            <person name="Sudo H."/>
            <person name="Hosoiri T."/>
            <person name="Kaku Y."/>
            <person name="Kodaira H."/>
            <person name="Kondo H."/>
            <person name="Sugawara M."/>
            <person name="Takahashi M."/>
            <person name="Kanda K."/>
            <person name="Yokoi T."/>
            <person name="Furuya T."/>
            <person name="Kikkawa E."/>
            <person name="Omura Y."/>
            <person name="Abe K."/>
            <person name="Kamihara K."/>
            <person name="Katsuta N."/>
            <person name="Sato K."/>
            <person name="Tanikawa M."/>
            <person name="Yamazaki M."/>
            <person name="Ninomiya K."/>
            <person name="Ishibashi T."/>
            <person name="Yamashita H."/>
            <person name="Murakawa K."/>
            <person name="Fujimori K."/>
            <person name="Tanai H."/>
            <person name="Kimata M."/>
            <person name="Watanabe M."/>
            <person name="Hiraoka S."/>
            <person name="Chiba Y."/>
            <person name="Ishida S."/>
            <person name="Ono Y."/>
            <person name="Takiguchi S."/>
            <person name="Watanabe S."/>
            <person name="Yosida M."/>
            <person name="Hotuta T."/>
            <person name="Kusano J."/>
            <person name="Kanehori K."/>
            <person name="Takahashi-Fujii A."/>
            <person name="Hara H."/>
            <person name="Tanase T.-O."/>
            <person name="Nomura Y."/>
            <person name="Togiya S."/>
            <person name="Komai F."/>
            <person name="Hara R."/>
            <person name="Takeuchi K."/>
            <person name="Arita M."/>
            <person name="Imose N."/>
            <person name="Musashino K."/>
            <person name="Yuuki H."/>
            <person name="Oshima A."/>
            <person name="Sasaki N."/>
            <person name="Aotsuka S."/>
            <person name="Yoshikawa Y."/>
            <person name="Matsunawa H."/>
            <person name="Ichihara T."/>
            <person name="Shiohata N."/>
            <person name="Sano S."/>
            <person name="Moriya S."/>
            <person name="Momiyama H."/>
            <person name="Satoh N."/>
            <person name="Takami S."/>
            <person name="Terashima Y."/>
            <person name="Suzuki O."/>
            <person name="Nakagawa S."/>
            <person name="Senoh A."/>
            <person name="Mizoguchi H."/>
            <person name="Goto Y."/>
            <person name="Shimizu F."/>
            <person name="Wakebe H."/>
            <person name="Hishigaki H."/>
            <person name="Watanabe T."/>
            <person name="Sugiyama A."/>
            <person name="Takemoto M."/>
            <person name="Kawakami B."/>
            <person name="Yamazaki M."/>
            <person name="Watanabe K."/>
            <person name="Kumagai A."/>
            <person name="Itakura S."/>
            <person name="Fukuzumi Y."/>
            <person name="Fujimori Y."/>
            <person name="Komiyama M."/>
            <person name="Tashiro H."/>
            <person name="Tanigami A."/>
            <person name="Fujiwara T."/>
            <person name="Ono T."/>
            <person name="Yamada K."/>
            <person name="Fujii Y."/>
            <person name="Ozaki K."/>
            <person name="Hirao M."/>
            <person name="Ohmori Y."/>
            <person name="Kawabata A."/>
            <person name="Hikiji T."/>
            <person name="Kobatake N."/>
            <person name="Inagaki H."/>
            <person name="Ikema Y."/>
            <person name="Okamoto S."/>
            <person name="Okitani R."/>
            <person name="Kawakami T."/>
            <person name="Noguchi S."/>
            <person name="Itoh T."/>
            <person name="Shigeta K."/>
            <person name="Senba T."/>
            <person name="Matsumura K."/>
            <person name="Nakajima Y."/>
            <person name="Mizuno T."/>
            <person name="Morinaga M."/>
            <person name="Sasaki M."/>
            <person name="Togashi T."/>
            <person name="Oyama M."/>
            <person name="Hata H."/>
            <person name="Watanabe M."/>
            <person name="Komatsu T."/>
            <person name="Mizushima-Sugano J."/>
            <person name="Satoh T."/>
            <person name="Shirai Y."/>
            <person name="Takahashi Y."/>
            <person name="Nakagawa K."/>
            <person name="Okumura K."/>
            <person name="Nagase T."/>
            <person name="Nomura N."/>
            <person name="Kikuchi H."/>
            <person name="Masuho Y."/>
            <person name="Yamashita R."/>
            <person name="Nakai K."/>
            <person name="Yada T."/>
            <person name="Nakamura Y."/>
            <person name="Ohara O."/>
            <person name="Isogai T."/>
            <person name="Sugano S."/>
        </authorList>
    </citation>
    <scope>NUCLEOTIDE SEQUENCE [LARGE SCALE MRNA] (ISOFORM 3)</scope>
    <source>
        <tissue>Tongue</tissue>
    </source>
</reference>
<reference key="4">
    <citation type="journal article" date="2006" name="Nature">
        <title>DNA sequence and analysis of human chromosome 8.</title>
        <authorList>
            <person name="Nusbaum C."/>
            <person name="Mikkelsen T.S."/>
            <person name="Zody M.C."/>
            <person name="Asakawa S."/>
            <person name="Taudien S."/>
            <person name="Garber M."/>
            <person name="Kodira C.D."/>
            <person name="Schueler M.G."/>
            <person name="Shimizu A."/>
            <person name="Whittaker C.A."/>
            <person name="Chang J.L."/>
            <person name="Cuomo C.A."/>
            <person name="Dewar K."/>
            <person name="FitzGerald M.G."/>
            <person name="Yang X."/>
            <person name="Allen N.R."/>
            <person name="Anderson S."/>
            <person name="Asakawa T."/>
            <person name="Blechschmidt K."/>
            <person name="Bloom T."/>
            <person name="Borowsky M.L."/>
            <person name="Butler J."/>
            <person name="Cook A."/>
            <person name="Corum B."/>
            <person name="DeArellano K."/>
            <person name="DeCaprio D."/>
            <person name="Dooley K.T."/>
            <person name="Dorris L. III"/>
            <person name="Engels R."/>
            <person name="Gloeckner G."/>
            <person name="Hafez N."/>
            <person name="Hagopian D.S."/>
            <person name="Hall J.L."/>
            <person name="Ishikawa S.K."/>
            <person name="Jaffe D.B."/>
            <person name="Kamat A."/>
            <person name="Kudoh J."/>
            <person name="Lehmann R."/>
            <person name="Lokitsang T."/>
            <person name="Macdonald P."/>
            <person name="Major J.E."/>
            <person name="Matthews C.D."/>
            <person name="Mauceli E."/>
            <person name="Menzel U."/>
            <person name="Mihalev A.H."/>
            <person name="Minoshima S."/>
            <person name="Murayama Y."/>
            <person name="Naylor J.W."/>
            <person name="Nicol R."/>
            <person name="Nguyen C."/>
            <person name="O'Leary S.B."/>
            <person name="O'Neill K."/>
            <person name="Parker S.C.J."/>
            <person name="Polley A."/>
            <person name="Raymond C.K."/>
            <person name="Reichwald K."/>
            <person name="Rodriguez J."/>
            <person name="Sasaki T."/>
            <person name="Schilhabel M."/>
            <person name="Siddiqui R."/>
            <person name="Smith C.L."/>
            <person name="Sneddon T.P."/>
            <person name="Talamas J.A."/>
            <person name="Tenzin P."/>
            <person name="Topham K."/>
            <person name="Venkataraman V."/>
            <person name="Wen G."/>
            <person name="Yamazaki S."/>
            <person name="Young S.K."/>
            <person name="Zeng Q."/>
            <person name="Zimmer A.R."/>
            <person name="Rosenthal A."/>
            <person name="Birren B.W."/>
            <person name="Platzer M."/>
            <person name="Shimizu N."/>
            <person name="Lander E.S."/>
        </authorList>
    </citation>
    <scope>NUCLEOTIDE SEQUENCE [LARGE SCALE GENOMIC DNA]</scope>
</reference>
<reference key="5">
    <citation type="submission" date="2005-09" db="EMBL/GenBank/DDBJ databases">
        <authorList>
            <person name="Mural R.J."/>
            <person name="Istrail S."/>
            <person name="Sutton G.G."/>
            <person name="Florea L."/>
            <person name="Halpern A.L."/>
            <person name="Mobarry C.M."/>
            <person name="Lippert R."/>
            <person name="Walenz B."/>
            <person name="Shatkay H."/>
            <person name="Dew I."/>
            <person name="Miller J.R."/>
            <person name="Flanigan M.J."/>
            <person name="Edwards N.J."/>
            <person name="Bolanos R."/>
            <person name="Fasulo D."/>
            <person name="Halldorsson B.V."/>
            <person name="Hannenhalli S."/>
            <person name="Turner R."/>
            <person name="Yooseph S."/>
            <person name="Lu F."/>
            <person name="Nusskern D.R."/>
            <person name="Shue B.C."/>
            <person name="Zheng X.H."/>
            <person name="Zhong F."/>
            <person name="Delcher A.L."/>
            <person name="Huson D.H."/>
            <person name="Kravitz S.A."/>
            <person name="Mouchard L."/>
            <person name="Reinert K."/>
            <person name="Remington K.A."/>
            <person name="Clark A.G."/>
            <person name="Waterman M.S."/>
            <person name="Eichler E.E."/>
            <person name="Adams M.D."/>
            <person name="Hunkapiller M.W."/>
            <person name="Myers E.W."/>
            <person name="Venter J.C."/>
        </authorList>
    </citation>
    <scope>NUCLEOTIDE SEQUENCE [LARGE SCALE GENOMIC DNA]</scope>
</reference>
<reference key="6">
    <citation type="journal article" date="2004" name="Genome Res.">
        <title>The status, quality, and expansion of the NIH full-length cDNA project: the Mammalian Gene Collection (MGC).</title>
        <authorList>
            <consortium name="The MGC Project Team"/>
        </authorList>
    </citation>
    <scope>NUCLEOTIDE SEQUENCE [LARGE SCALE MRNA] (ISOFORM 1)</scope>
    <source>
        <tissue>Lymphoma</tissue>
    </source>
</reference>
<reference key="7">
    <citation type="journal article" date="2009" name="Biochemistry">
        <title>The proline-rich N-terminal sequence of calcineurin Abeta determines substrate binding.</title>
        <authorList>
            <person name="Kilka S."/>
            <person name="Erdmann F."/>
            <person name="Migdoll A."/>
            <person name="Fischer G."/>
            <person name="Weiwad M."/>
        </authorList>
    </citation>
    <scope>FUNCTION</scope>
    <scope>INTERACTION WITH CALCINEURIN B</scope>
    <scope>CATALYTIC ACTIVITY</scope>
    <scope>BIOPHYSICOCHEMICAL PROPERTIES</scope>
    <scope>SUBCELLULAR LOCATION</scope>
</reference>
<reference key="8">
    <citation type="journal article" date="2013" name="J. Proteome Res.">
        <title>Toward a comprehensive characterization of a human cancer cell phosphoproteome.</title>
        <authorList>
            <person name="Zhou H."/>
            <person name="Di Palma S."/>
            <person name="Preisinger C."/>
            <person name="Peng M."/>
            <person name="Polat A.N."/>
            <person name="Heck A.J."/>
            <person name="Mohammed S."/>
        </authorList>
    </citation>
    <scope>PHOSPHORYLATION [LARGE SCALE ANALYSIS] AT SER-483</scope>
    <scope>IDENTIFICATION BY MASS SPECTROMETRY [LARGE SCALE ANALYSIS]</scope>
    <source>
        <tissue>Erythroleukemia</tissue>
    </source>
</reference>
<reference key="9">
    <citation type="journal article" date="2021" name="Proc. Natl. Acad. Sci. U.S.A.">
        <title>SPATA33 localizes calcineurin to the mitochondria and regulates sperm motility in mice.</title>
        <authorList>
            <person name="Miyata H."/>
            <person name="Oura S."/>
            <person name="Morohoshi A."/>
            <person name="Shimada K."/>
            <person name="Mashiko D."/>
            <person name="Oyama Y."/>
            <person name="Kaneda Y."/>
            <person name="Matsumura T."/>
            <person name="Abbasi F."/>
            <person name="Ikawa M."/>
        </authorList>
    </citation>
    <scope>INTERACTION WITH SPATA33</scope>
</reference>
<organism>
    <name type="scientific">Homo sapiens</name>
    <name type="common">Human</name>
    <dbReference type="NCBI Taxonomy" id="9606"/>
    <lineage>
        <taxon>Eukaryota</taxon>
        <taxon>Metazoa</taxon>
        <taxon>Chordata</taxon>
        <taxon>Craniata</taxon>
        <taxon>Vertebrata</taxon>
        <taxon>Euteleostomi</taxon>
        <taxon>Mammalia</taxon>
        <taxon>Eutheria</taxon>
        <taxon>Euarchontoglires</taxon>
        <taxon>Primates</taxon>
        <taxon>Haplorrhini</taxon>
        <taxon>Catarrhini</taxon>
        <taxon>Hominidae</taxon>
        <taxon>Homo</taxon>
    </lineage>
</organism>
<accession>P48454</accession>
<accession>B4DRT5</accession>
<accession>Q9BSS6</accession>
<accession>Q9H4M5</accession>
<gene>
    <name type="primary">PPP3CC</name>
    <name type="synonym">CALNA3</name>
    <name type="synonym">CNA3</name>
</gene>
<evidence type="ECO:0000250" key="1">
    <source>
        <dbReference type="UniProtKB" id="P16298"/>
    </source>
</evidence>
<evidence type="ECO:0000250" key="2">
    <source>
        <dbReference type="UniProtKB" id="P48455"/>
    </source>
</evidence>
<evidence type="ECO:0000250" key="3">
    <source>
        <dbReference type="UniProtKB" id="Q08209"/>
    </source>
</evidence>
<evidence type="ECO:0000256" key="4">
    <source>
        <dbReference type="SAM" id="MobiDB-lite"/>
    </source>
</evidence>
<evidence type="ECO:0000269" key="5">
    <source>
    </source>
</evidence>
<evidence type="ECO:0000269" key="6">
    <source>
    </source>
</evidence>
<evidence type="ECO:0000269" key="7">
    <source>
    </source>
</evidence>
<evidence type="ECO:0000303" key="8">
    <source>
    </source>
</evidence>
<evidence type="ECO:0000303" key="9">
    <source>
    </source>
</evidence>
<evidence type="ECO:0000303" key="10">
    <source ref="2"/>
</evidence>
<evidence type="ECO:0000305" key="11"/>
<evidence type="ECO:0007744" key="12">
    <source>
    </source>
</evidence>
<evidence type="ECO:0007829" key="13">
    <source>
        <dbReference type="PDB" id="7U0T"/>
    </source>
</evidence>
<comment type="function">
    <text evidence="6">Calcium-dependent, calmodulin-stimulated protein phosphatase which plays an essential role in the transduction of intracellular Ca(2+)-mediated signals. Dephosphorylates and activates transcription factor NFATC1. Dephosphorylates and inactivates transcription factor ELK1. Dephosphorylates DARPP32.</text>
</comment>
<comment type="catalytic activity">
    <reaction evidence="6">
        <text>O-phospho-L-seryl-[protein] + H2O = L-seryl-[protein] + phosphate</text>
        <dbReference type="Rhea" id="RHEA:20629"/>
        <dbReference type="Rhea" id="RHEA-COMP:9863"/>
        <dbReference type="Rhea" id="RHEA-COMP:11604"/>
        <dbReference type="ChEBI" id="CHEBI:15377"/>
        <dbReference type="ChEBI" id="CHEBI:29999"/>
        <dbReference type="ChEBI" id="CHEBI:43474"/>
        <dbReference type="ChEBI" id="CHEBI:83421"/>
        <dbReference type="EC" id="3.1.3.16"/>
    </reaction>
</comment>
<comment type="catalytic activity">
    <reaction evidence="6">
        <text>O-phospho-L-threonyl-[protein] + H2O = L-threonyl-[protein] + phosphate</text>
        <dbReference type="Rhea" id="RHEA:47004"/>
        <dbReference type="Rhea" id="RHEA-COMP:11060"/>
        <dbReference type="Rhea" id="RHEA-COMP:11605"/>
        <dbReference type="ChEBI" id="CHEBI:15377"/>
        <dbReference type="ChEBI" id="CHEBI:30013"/>
        <dbReference type="ChEBI" id="CHEBI:43474"/>
        <dbReference type="ChEBI" id="CHEBI:61977"/>
        <dbReference type="EC" id="3.1.3.16"/>
    </reaction>
</comment>
<comment type="cofactor">
    <cofactor evidence="1">
        <name>Fe(3+)</name>
        <dbReference type="ChEBI" id="CHEBI:29034"/>
    </cofactor>
    <text evidence="1">Binds 1 Fe(3+) ion per subunit.</text>
</comment>
<comment type="cofactor">
    <cofactor evidence="1">
        <name>Zn(2+)</name>
        <dbReference type="ChEBI" id="CHEBI:29105"/>
    </cofactor>
    <text evidence="1">Binds 1 zinc ion per subunit.</text>
</comment>
<comment type="activity regulation">
    <text evidence="1">Activated by Ca(2+)-bound calmodulin following an increase in intracellular Ca(2+). At low Ca(2+) concentrations, the catalytic subunit (also known as calcineurin A) is inactive and is bound to the regulatory subunit (also known as calcineurin B) in which only two high-affinity binding sites are occupied by Ca(2+). In response to elevated calcium levels, the occupancy of the low-affinity sites on calcineurin B by Ca(2+) causes a conformational change of the C-terminal regulatory domain of calcineurin A, resulting in the exposure of the calmodulin-binding domain and in the partial activation of calcineurin A. The subsequent binding of Ca(2+)-bound calmodulin leads to the displacement of the autoinhibitory domain from the active site and possibly of the autoinhibitory segment from the substrate binding site which fully activates calcineurin A.</text>
</comment>
<comment type="biophysicochemical properties">
    <kinetics>
        <KM evidence="6">1.27 uM for NFATC1</KM>
        <KM evidence="6">0.94 uM for DARPP32</KM>
    </kinetics>
</comment>
<comment type="subunit">
    <text evidence="1 2 6 7">Forms a complex composed of a calmodulin-dependent catalytic subunit (also known as calcineurin A) and a regulatory Ca(2+)-binding subunit (also known as calcineurin B) (PubMed:19154138). There are three catalytic subunits, each encoded by a separate gene (PPP3CA, PPP3CB, and PPP3CC) and two regulatory subunits which are also encoded by separate genes (PPP3R1 and PPP3R2). In response to an increase in Ca(2+) intracellular levels, forms a complex composed of PPP3CC/calcineurin A, calcineurin B and calmodulin (By similarity). Interacts (via calmodulin-binding domain) with calmodulin; the interaction depends on calmodulin binding to Ca(2+) (By similarity). Interacts with UNC119 (By similarity). Interacts with SPATA33 (via PQIIIT motif) (PubMed:34446558). Interacts with VDAC2 in a SPATA33-dependent manner (By similarity).</text>
</comment>
<comment type="interaction">
    <interactant intactId="EBI-2827192">
        <id>P48454</id>
    </interactant>
    <interactant intactId="EBI-7121510">
        <id>P49418</id>
        <label>AMPH</label>
    </interactant>
    <organismsDiffer>false</organismsDiffer>
    <experiments>3</experiments>
</comment>
<comment type="interaction">
    <interactant intactId="EBI-2827192">
        <id>P48454</id>
    </interactant>
    <interactant intactId="EBI-77613">
        <id>P05067</id>
        <label>APP</label>
    </interactant>
    <organismsDiffer>false</organismsDiffer>
    <experiments>3</experiments>
</comment>
<comment type="interaction">
    <interactant intactId="EBI-2827192">
        <id>P48454</id>
    </interactant>
    <interactant intactId="EBI-915984">
        <id>P63098</id>
        <label>PPP3R1</label>
    </interactant>
    <organismsDiffer>false</organismsDiffer>
    <experiments>6</experiments>
</comment>
<comment type="interaction">
    <interactant intactId="EBI-2827192">
        <id>P48454</id>
    </interactant>
    <interactant intactId="EBI-17572815">
        <id>Q96N06</id>
        <label>SPATA33</label>
    </interactant>
    <organismsDiffer>false</organismsDiffer>
    <experiments>4</experiments>
</comment>
<comment type="interaction">
    <interactant intactId="EBI-2827192">
        <id>P48454</id>
    </interactant>
    <interactant intactId="EBI-711260">
        <id>Q13432</id>
        <label>UNC119</label>
    </interactant>
    <organismsDiffer>false</organismsDiffer>
    <experiments>3</experiments>
</comment>
<comment type="subcellular location">
    <subcellularLocation>
        <location evidence="2">Mitochondrion</location>
    </subcellularLocation>
    <text evidence="2">Localizes in the mitochondria in a SPATA33-dependent manner.</text>
</comment>
<comment type="alternative products">
    <event type="alternative splicing"/>
    <isoform>
        <id>P48454-1</id>
        <name>1</name>
        <sequence type="displayed"/>
    </isoform>
    <isoform>
        <id>P48454-2</id>
        <name>2</name>
        <sequence type="described" ref="VSP_037946"/>
    </isoform>
    <isoform>
        <id>P48454-3</id>
        <name>3</name>
        <sequence type="described" ref="VSP_045211"/>
    </isoform>
</comment>
<comment type="tissue specificity">
    <text evidence="5">Testis.</text>
</comment>
<comment type="domain">
    <text evidence="1">The autoinhibitory domain prevents access to the catalytic site.</text>
</comment>
<comment type="domain">
    <text evidence="1">The autoinhibitory segment prevents access to the substrate binding site.</text>
</comment>
<comment type="domain">
    <text evidence="3">Possible isomerization of Pro-305 within the SAPNY motif triggers a conformation switch which affects the organization and thus accessibility of the active site and the substrate binding region (PxIxIF motif). The trans- to cis-transition may favor calcineurin A activation and substrate binding. The reverse cis- to trans-transition may be enhanced by peptidyl-prolyl isomerases such as PPIA.</text>
</comment>
<comment type="similarity">
    <text evidence="11">Belongs to the PPP phosphatase family. PP-2B subfamily.</text>
</comment>
<protein>
    <recommendedName>
        <fullName>Serine/threonine-protein phosphatase 2B catalytic subunit gamma isoform</fullName>
        <ecNumber evidence="6">3.1.3.16</ecNumber>
    </recommendedName>
    <alternativeName>
        <fullName>CAM-PRP catalytic subunit</fullName>
    </alternativeName>
    <alternativeName>
        <fullName>Calcineurin, testis-specific catalytic subunit</fullName>
    </alternativeName>
    <alternativeName>
        <fullName>Calmodulin-dependent calcineurin A subunit gamma isoform</fullName>
    </alternativeName>
</protein>
<name>PP2BC_HUMAN</name>
<proteinExistence type="evidence at protein level"/>
<keyword id="KW-0002">3D-structure</keyword>
<keyword id="KW-0025">Alternative splicing</keyword>
<keyword id="KW-0112">Calmodulin-binding</keyword>
<keyword id="KW-0378">Hydrolase</keyword>
<keyword id="KW-0408">Iron</keyword>
<keyword id="KW-0479">Metal-binding</keyword>
<keyword id="KW-0496">Mitochondrion</keyword>
<keyword id="KW-0597">Phosphoprotein</keyword>
<keyword id="KW-0904">Protein phosphatase</keyword>
<keyword id="KW-1267">Proteomics identification</keyword>
<keyword id="KW-1185">Reference proteome</keyword>
<keyword id="KW-0862">Zinc</keyword>